<protein>
    <recommendedName>
        <fullName evidence="1">Large ribosomal subunit protein uL22</fullName>
    </recommendedName>
    <alternativeName>
        <fullName evidence="2">50S ribosomal protein L22</fullName>
    </alternativeName>
</protein>
<sequence length="109" mass="11786">MRVSANLKSVRLSAQKCRLVADLVRGKSVDQALNILAFSPKKGAVIIKKVLESAIANAEHNEGADIDTLRVTSIFVDKGASLKRFTARAKGRGNRIEKQTCHISLTVGN</sequence>
<reference key="1">
    <citation type="journal article" date="2003" name="Proc. Natl. Acad. Sci. U.S.A.">
        <title>The complete genome sequence of Chromobacterium violaceum reveals remarkable and exploitable bacterial adaptability.</title>
        <authorList>
            <person name="Vasconcelos A.T.R."/>
            <person name="de Almeida D.F."/>
            <person name="Hungria M."/>
            <person name="Guimaraes C.T."/>
            <person name="Antonio R.V."/>
            <person name="Almeida F.C."/>
            <person name="de Almeida L.G.P."/>
            <person name="de Almeida R."/>
            <person name="Alves-Gomes J.A."/>
            <person name="Andrade E.M."/>
            <person name="Araripe J."/>
            <person name="de Araujo M.F.F."/>
            <person name="Astolfi-Filho S."/>
            <person name="Azevedo V."/>
            <person name="Baptista A.J."/>
            <person name="Bataus L.A.M."/>
            <person name="Batista J.S."/>
            <person name="Belo A."/>
            <person name="van den Berg C."/>
            <person name="Bogo M."/>
            <person name="Bonatto S."/>
            <person name="Bordignon J."/>
            <person name="Brigido M.M."/>
            <person name="Brito C.A."/>
            <person name="Brocchi M."/>
            <person name="Burity H.A."/>
            <person name="Camargo A.A."/>
            <person name="Cardoso D.D.P."/>
            <person name="Carneiro N.P."/>
            <person name="Carraro D.M."/>
            <person name="Carvalho C.M.B."/>
            <person name="Cascardo J.C.M."/>
            <person name="Cavada B.S."/>
            <person name="Chueire L.M.O."/>
            <person name="Creczynski-Pasa T.B."/>
            <person name="Cunha-Junior N.C."/>
            <person name="Fagundes N."/>
            <person name="Falcao C.L."/>
            <person name="Fantinatti F."/>
            <person name="Farias I.P."/>
            <person name="Felipe M.S.S."/>
            <person name="Ferrari L.P."/>
            <person name="Ferro J.A."/>
            <person name="Ferro M.I.T."/>
            <person name="Franco G.R."/>
            <person name="Freitas N.S.A."/>
            <person name="Furlan L.R."/>
            <person name="Gazzinelli R.T."/>
            <person name="Gomes E.A."/>
            <person name="Goncalves P.R."/>
            <person name="Grangeiro T.B."/>
            <person name="Grattapaglia D."/>
            <person name="Grisard E.C."/>
            <person name="Hanna E.S."/>
            <person name="Jardim S.N."/>
            <person name="Laurino J."/>
            <person name="Leoi L.C.T."/>
            <person name="Lima L.F.A."/>
            <person name="Loureiro M.F."/>
            <person name="Lyra M.C.C.P."/>
            <person name="Madeira H.M.F."/>
            <person name="Manfio G.P."/>
            <person name="Maranhao A.Q."/>
            <person name="Martins W.S."/>
            <person name="di Mauro S.M.Z."/>
            <person name="de Medeiros S.R.B."/>
            <person name="Meissner R.V."/>
            <person name="Moreira M.A.M."/>
            <person name="Nascimento F.F."/>
            <person name="Nicolas M.F."/>
            <person name="Oliveira J.G."/>
            <person name="Oliveira S.C."/>
            <person name="Paixao R.F.C."/>
            <person name="Parente J.A."/>
            <person name="Pedrosa F.O."/>
            <person name="Pena S.D.J."/>
            <person name="Pereira J.O."/>
            <person name="Pereira M."/>
            <person name="Pinto L.S.R.C."/>
            <person name="Pinto L.S."/>
            <person name="Porto J.I.R."/>
            <person name="Potrich D.P."/>
            <person name="Ramalho-Neto C.E."/>
            <person name="Reis A.M.M."/>
            <person name="Rigo L.U."/>
            <person name="Rondinelli E."/>
            <person name="Santos E.B.P."/>
            <person name="Santos F.R."/>
            <person name="Schneider M.P.C."/>
            <person name="Seuanez H.N."/>
            <person name="Silva A.M.R."/>
            <person name="da Silva A.L.C."/>
            <person name="Silva D.W."/>
            <person name="Silva R."/>
            <person name="Simoes I.C."/>
            <person name="Simon D."/>
            <person name="Soares C.M.A."/>
            <person name="Soares R.B.A."/>
            <person name="Souza E.M."/>
            <person name="Souza K.R.L."/>
            <person name="Souza R.C."/>
            <person name="Steffens M.B.R."/>
            <person name="Steindel M."/>
            <person name="Teixeira S.R."/>
            <person name="Urmenyi T."/>
            <person name="Vettore A."/>
            <person name="Wassem R."/>
            <person name="Zaha A."/>
            <person name="Simpson A.J.G."/>
        </authorList>
    </citation>
    <scope>NUCLEOTIDE SEQUENCE [LARGE SCALE GENOMIC DNA]</scope>
    <source>
        <strain>ATCC 12472 / DSM 30191 / JCM 1249 / CCUG 213 / NBRC 12614 / NCIMB 9131 / NCTC 9757 / MK</strain>
    </source>
</reference>
<accession>Q7NQF7</accession>
<proteinExistence type="inferred from homology"/>
<organism>
    <name type="scientific">Chromobacterium violaceum (strain ATCC 12472 / DSM 30191 / JCM 1249 / CCUG 213 / NBRC 12614 / NCIMB 9131 / NCTC 9757 / MK)</name>
    <dbReference type="NCBI Taxonomy" id="243365"/>
    <lineage>
        <taxon>Bacteria</taxon>
        <taxon>Pseudomonadati</taxon>
        <taxon>Pseudomonadota</taxon>
        <taxon>Betaproteobacteria</taxon>
        <taxon>Neisseriales</taxon>
        <taxon>Chromobacteriaceae</taxon>
        <taxon>Chromobacterium</taxon>
    </lineage>
</organism>
<feature type="chain" id="PRO_0000125141" description="Large ribosomal subunit protein uL22">
    <location>
        <begin position="1"/>
        <end position="109"/>
    </location>
</feature>
<comment type="function">
    <text evidence="1">This protein binds specifically to 23S rRNA; its binding is stimulated by other ribosomal proteins, e.g. L4, L17, and L20. It is important during the early stages of 50S assembly. It makes multiple contacts with different domains of the 23S rRNA in the assembled 50S subunit and ribosome (By similarity).</text>
</comment>
<comment type="function">
    <text evidence="1">The globular domain of the protein is located near the polypeptide exit tunnel on the outside of the subunit, while an extended beta-hairpin is found that lines the wall of the exit tunnel in the center of the 70S ribosome.</text>
</comment>
<comment type="subunit">
    <text evidence="1">Part of the 50S ribosomal subunit.</text>
</comment>
<comment type="similarity">
    <text evidence="1">Belongs to the universal ribosomal protein uL22 family.</text>
</comment>
<keyword id="KW-1185">Reference proteome</keyword>
<keyword id="KW-0687">Ribonucleoprotein</keyword>
<keyword id="KW-0689">Ribosomal protein</keyword>
<keyword id="KW-0694">RNA-binding</keyword>
<keyword id="KW-0699">rRNA-binding</keyword>
<gene>
    <name evidence="1" type="primary">rplV</name>
    <name type="ordered locus">CV_4181</name>
</gene>
<name>RL22_CHRVO</name>
<evidence type="ECO:0000255" key="1">
    <source>
        <dbReference type="HAMAP-Rule" id="MF_01331"/>
    </source>
</evidence>
<evidence type="ECO:0000305" key="2"/>
<dbReference type="EMBL" id="AE016825">
    <property type="protein sequence ID" value="AAQ61841.1"/>
    <property type="molecule type" value="Genomic_DNA"/>
</dbReference>
<dbReference type="RefSeq" id="WP_011137728.1">
    <property type="nucleotide sequence ID" value="NC_005085.1"/>
</dbReference>
<dbReference type="SMR" id="Q7NQF7"/>
<dbReference type="STRING" id="243365.CV_4181"/>
<dbReference type="GeneID" id="66366347"/>
<dbReference type="KEGG" id="cvi:CV_4181"/>
<dbReference type="eggNOG" id="COG0091">
    <property type="taxonomic scope" value="Bacteria"/>
</dbReference>
<dbReference type="HOGENOM" id="CLU_083987_3_3_4"/>
<dbReference type="OrthoDB" id="9805969at2"/>
<dbReference type="Proteomes" id="UP000001424">
    <property type="component" value="Chromosome"/>
</dbReference>
<dbReference type="GO" id="GO:0022625">
    <property type="term" value="C:cytosolic large ribosomal subunit"/>
    <property type="evidence" value="ECO:0007669"/>
    <property type="project" value="TreeGrafter"/>
</dbReference>
<dbReference type="GO" id="GO:0019843">
    <property type="term" value="F:rRNA binding"/>
    <property type="evidence" value="ECO:0007669"/>
    <property type="project" value="UniProtKB-UniRule"/>
</dbReference>
<dbReference type="GO" id="GO:0003735">
    <property type="term" value="F:structural constituent of ribosome"/>
    <property type="evidence" value="ECO:0007669"/>
    <property type="project" value="InterPro"/>
</dbReference>
<dbReference type="GO" id="GO:0006412">
    <property type="term" value="P:translation"/>
    <property type="evidence" value="ECO:0007669"/>
    <property type="project" value="UniProtKB-UniRule"/>
</dbReference>
<dbReference type="CDD" id="cd00336">
    <property type="entry name" value="Ribosomal_L22"/>
    <property type="match status" value="1"/>
</dbReference>
<dbReference type="FunFam" id="3.90.470.10:FF:000001">
    <property type="entry name" value="50S ribosomal protein L22"/>
    <property type="match status" value="1"/>
</dbReference>
<dbReference type="Gene3D" id="3.90.470.10">
    <property type="entry name" value="Ribosomal protein L22/L17"/>
    <property type="match status" value="1"/>
</dbReference>
<dbReference type="HAMAP" id="MF_01331_B">
    <property type="entry name" value="Ribosomal_uL22_B"/>
    <property type="match status" value="1"/>
</dbReference>
<dbReference type="InterPro" id="IPR001063">
    <property type="entry name" value="Ribosomal_uL22"/>
</dbReference>
<dbReference type="InterPro" id="IPR005727">
    <property type="entry name" value="Ribosomal_uL22_bac/chlpt-type"/>
</dbReference>
<dbReference type="InterPro" id="IPR047867">
    <property type="entry name" value="Ribosomal_uL22_bac/org-type"/>
</dbReference>
<dbReference type="InterPro" id="IPR018260">
    <property type="entry name" value="Ribosomal_uL22_CS"/>
</dbReference>
<dbReference type="InterPro" id="IPR036394">
    <property type="entry name" value="Ribosomal_uL22_sf"/>
</dbReference>
<dbReference type="NCBIfam" id="TIGR01044">
    <property type="entry name" value="rplV_bact"/>
    <property type="match status" value="1"/>
</dbReference>
<dbReference type="PANTHER" id="PTHR13501">
    <property type="entry name" value="CHLOROPLAST 50S RIBOSOMAL PROTEIN L22-RELATED"/>
    <property type="match status" value="1"/>
</dbReference>
<dbReference type="PANTHER" id="PTHR13501:SF8">
    <property type="entry name" value="LARGE RIBOSOMAL SUBUNIT PROTEIN UL22M"/>
    <property type="match status" value="1"/>
</dbReference>
<dbReference type="Pfam" id="PF00237">
    <property type="entry name" value="Ribosomal_L22"/>
    <property type="match status" value="1"/>
</dbReference>
<dbReference type="SUPFAM" id="SSF54843">
    <property type="entry name" value="Ribosomal protein L22"/>
    <property type="match status" value="1"/>
</dbReference>
<dbReference type="PROSITE" id="PS00464">
    <property type="entry name" value="RIBOSOMAL_L22"/>
    <property type="match status" value="1"/>
</dbReference>